<keyword id="KW-1074">Activation of host NF-kappa-B by virus</keyword>
<keyword id="KW-0010">Activator</keyword>
<keyword id="KW-0053">Apoptosis</keyword>
<keyword id="KW-1035">Host cytoplasm</keyword>
<keyword id="KW-1079">Host G2/M cell cycle arrest by virus</keyword>
<keyword id="KW-1045">Host mitochondrion</keyword>
<keyword id="KW-1048">Host nucleus</keyword>
<keyword id="KW-0945">Host-virus interaction</keyword>
<keyword id="KW-1121">Modulation of host cell cycle by virus</keyword>
<keyword id="KW-0804">Transcription</keyword>
<keyword id="KW-0805">Transcription regulation</keyword>
<reference key="1">
    <citation type="journal article" date="2000" name="J. Gen. Virol.">
        <title>Long-term mutation rates in the hepatitis B virus genome.</title>
        <authorList>
            <person name="Hannoun C."/>
            <person name="Horal P."/>
            <person name="Lindh M."/>
        </authorList>
    </citation>
    <scope>NUCLEOTIDE SEQUENCE [GENOMIC DNA]</scope>
    <source>
        <strain>HBV/14611</strain>
        <strain>HBV/16091</strain>
        <strain>HBV/IK29902</strain>
    </source>
</reference>
<reference key="2">
    <citation type="journal article" date="2004" name="J. Virol.">
        <title>The enigmatic X gene of hepatitis B virus.</title>
        <authorList>
            <person name="Bouchard M.J."/>
            <person name="Schneider R.J."/>
        </authorList>
    </citation>
    <scope>REVIEW</scope>
</reference>
<reference key="3">
    <citation type="journal article" date="2006" name="Cancer Sci.">
        <title>Molecular functions and biological roles of hepatitis B virus x protein.</title>
        <authorList>
            <person name="Tang H."/>
            <person name="Oishi N."/>
            <person name="Kaneko S."/>
            <person name="Murakami S."/>
        </authorList>
    </citation>
    <scope>REVIEW</scope>
</reference>
<feature type="chain" id="PRO_0000319900" description="Protein X">
    <location>
        <begin position="1"/>
        <end position="154"/>
    </location>
</feature>
<feature type="region of interest" description="Mitochondrial targeting sequence" evidence="1">
    <location>
        <begin position="68"/>
        <end position="117"/>
    </location>
</feature>
<evidence type="ECO:0000255" key="1">
    <source>
        <dbReference type="HAMAP-Rule" id="MF_04074"/>
    </source>
</evidence>
<name>X_HBVB5</name>
<accession>Q9PXA2</accession>
<organism>
    <name type="scientific">Hepatitis B virus genotype B2 (isolate Vietnam/16091/1992)</name>
    <name type="common">HBV-B</name>
    <dbReference type="NCBI Taxonomy" id="489462"/>
    <lineage>
        <taxon>Viruses</taxon>
        <taxon>Riboviria</taxon>
        <taxon>Pararnavirae</taxon>
        <taxon>Artverviricota</taxon>
        <taxon>Revtraviricetes</taxon>
        <taxon>Blubervirales</taxon>
        <taxon>Hepadnaviridae</taxon>
        <taxon>Orthohepadnavirus</taxon>
        <taxon>Hepatitis B virus</taxon>
    </lineage>
</organism>
<sequence>MAARLCCQLDPARDVLCLRPVGAESRGRPLPGPLGAIPPASPPVVPTDHGAHLSLRGLPVCAFSSAGPCALRFTSARRMETTVNAPGNLPKVLHKRTLGLSVMSTTDLEAYFKDCVFTEWEELGEEVRLKVFVLGGCRHKLVCPPAPCNFFTSA</sequence>
<comment type="function">
    <text evidence="1">Multifunctional protein that plays a role in silencing host antiviral defenses and promoting viral transcription. Does not seem to be essential for HBV infection. May be directly involved in development of cirrhosis and liver cancer (hepatocellular carcinoma). Most of cytosolic activities involve modulation of cytosolic calcium. The effect on apoptosis is controversial depending on the cell types in which the studies have been conducted. May induce apoptosis by localizing in mitochondria and causing loss of mitochondrial membrane potential. May also modulate apoptosis by binding host CFLAR, a key regulator of the death-inducing signaling complex (DISC). Promotes viral transcription by using the host E3 ubiquitin ligase DDB1 to target the SMC5-SMC6 complex to proteasomal degradation. This host complex would otherwise bind to viral episomal DNA, and prevents its transcription. Moderately stimulates transcription of many different viral and cellular transcription elements. Promoters and enhancers stimulated by HBx contain DNA binding sites for NF-kappa-B, AP-1, AP-2, c-EBP, ATF/CREB, or the calcium-activated factor NF-AT.</text>
</comment>
<comment type="subunit">
    <text evidence="1">May form homodimer. May interact with host CEBPA, CFLAR, CREB1, DDB1, E4F1, HBXIP, HSPD1/HSP60, NFKBIA, POLR2E and SMAD4. Interacts with host SMC5-SMC6 complex and induces its degradation. Interacts with host TRPC4AP; leading to prevent ubiquitination of TRPC4AP. Interacts with host PLSCR1; this interaction promotes ubiquitination and degradation of HBx and impairs HBx-mediated cell proliferation.</text>
</comment>
<comment type="subcellular location">
    <subcellularLocation>
        <location evidence="1">Host cytoplasm</location>
    </subcellularLocation>
    <subcellularLocation>
        <location evidence="1">Host nucleus</location>
    </subcellularLocation>
    <subcellularLocation>
        <location evidence="1">Host mitochondrion</location>
    </subcellularLocation>
    <text evidence="1">Mainly cytoplasmic as only a fraction is detected in the nucleus. In cytoplasm, a minor fraction associates with mitochondria or proteasomes.</text>
</comment>
<comment type="PTM">
    <text evidence="1">A fraction may be phosphorylated in insect cells and HepG2 cells, a human hepatoblastoma cell line. Phosphorylated in vitro by host protein kinase C or mitogen-activated protein kinase. N-acetylated in insect cells.</text>
</comment>
<comment type="similarity">
    <text evidence="1">Belongs to the orthohepadnavirus protein X family.</text>
</comment>
<comment type="caution">
    <text>Transcriptional activities should be taken with a grain of salt. As of 2007, all studies demonstrating in vivo interaction between protein X and transcriptional components were performed with significant overexpression of both proteins and in the absence of viral infection.</text>
</comment>
<proteinExistence type="inferred from homology"/>
<organismHost>
    <name type="scientific">Homo sapiens</name>
    <name type="common">Human</name>
    <dbReference type="NCBI Taxonomy" id="9606"/>
</organismHost>
<organismHost>
    <name type="scientific">Pan troglodytes</name>
    <name type="common">Chimpanzee</name>
    <dbReference type="NCBI Taxonomy" id="9598"/>
</organismHost>
<protein>
    <recommendedName>
        <fullName evidence="1">Protein X</fullName>
    </recommendedName>
    <alternativeName>
        <fullName evidence="1">HBx</fullName>
    </alternativeName>
    <alternativeName>
        <fullName evidence="1">Peptide X</fullName>
    </alternativeName>
    <alternativeName>
        <fullName evidence="1">pX</fullName>
    </alternativeName>
</protein>
<dbReference type="EMBL" id="AF121243">
    <property type="protein sequence ID" value="AAF24685.1"/>
    <property type="molecule type" value="Genomic_DNA"/>
</dbReference>
<dbReference type="EMBL" id="AF121245">
    <property type="protein sequence ID" value="AAF24699.1"/>
    <property type="molecule type" value="Genomic_DNA"/>
</dbReference>
<dbReference type="Proteomes" id="UP000001386">
    <property type="component" value="Genome"/>
</dbReference>
<dbReference type="Proteomes" id="UP000158684">
    <property type="component" value="Genome"/>
</dbReference>
<dbReference type="GO" id="GO:0033650">
    <property type="term" value="C:host cell mitochondrion"/>
    <property type="evidence" value="ECO:0007669"/>
    <property type="project" value="UniProtKB-SubCell"/>
</dbReference>
<dbReference type="GO" id="GO:0042025">
    <property type="term" value="C:host cell nucleus"/>
    <property type="evidence" value="ECO:0007669"/>
    <property type="project" value="UniProtKB-SubCell"/>
</dbReference>
<dbReference type="GO" id="GO:0006351">
    <property type="term" value="P:DNA-templated transcription"/>
    <property type="evidence" value="ECO:0007669"/>
    <property type="project" value="UniProtKB-UniRule"/>
</dbReference>
<dbReference type="GO" id="GO:0085033">
    <property type="term" value="P:symbiont-mediated activation of host NF-kappaB cascade"/>
    <property type="evidence" value="ECO:0007669"/>
    <property type="project" value="UniProtKB-UniRule"/>
</dbReference>
<dbReference type="GO" id="GO:0039592">
    <property type="term" value="P:symbiont-mediated arrest of host cell cycle during G2/M transition"/>
    <property type="evidence" value="ECO:0007669"/>
    <property type="project" value="UniProtKB-UniRule"/>
</dbReference>
<dbReference type="GO" id="GO:0019079">
    <property type="term" value="P:viral genome replication"/>
    <property type="evidence" value="ECO:0007669"/>
    <property type="project" value="UniProtKB-UniRule"/>
</dbReference>
<dbReference type="HAMAP" id="MF_04074">
    <property type="entry name" value="HBV_X"/>
    <property type="match status" value="1"/>
</dbReference>
<dbReference type="InterPro" id="IPR000236">
    <property type="entry name" value="Transactivation_prot_X"/>
</dbReference>
<dbReference type="Pfam" id="PF00739">
    <property type="entry name" value="X"/>
    <property type="match status" value="1"/>
</dbReference>
<gene>
    <name evidence="1" type="primary">X</name>
</gene>